<protein>
    <recommendedName>
        <fullName>Myotoxin-3</fullName>
    </recommendedName>
</protein>
<name>MYX3_CROVV</name>
<dbReference type="PIR" id="S12909">
    <property type="entry name" value="S12909"/>
</dbReference>
<dbReference type="SMR" id="P63176"/>
<dbReference type="GO" id="GO:0005576">
    <property type="term" value="C:extracellular region"/>
    <property type="evidence" value="ECO:0007669"/>
    <property type="project" value="UniProtKB-SubCell"/>
</dbReference>
<dbReference type="GO" id="GO:0015459">
    <property type="term" value="F:potassium channel regulator activity"/>
    <property type="evidence" value="ECO:0007669"/>
    <property type="project" value="UniProtKB-KW"/>
</dbReference>
<dbReference type="GO" id="GO:0090729">
    <property type="term" value="F:toxin activity"/>
    <property type="evidence" value="ECO:0007669"/>
    <property type="project" value="UniProtKB-KW"/>
</dbReference>
<dbReference type="GO" id="GO:0044564">
    <property type="term" value="P:envenomation resulting in occlusion of the pore of voltage-gated potassium channel in another organism"/>
    <property type="evidence" value="ECO:0000250"/>
    <property type="project" value="UniProtKB"/>
</dbReference>
<dbReference type="FunFam" id="2.20.20.10:FF:000001">
    <property type="entry name" value="Crotamine"/>
    <property type="match status" value="1"/>
</dbReference>
<dbReference type="Gene3D" id="2.20.20.10">
    <property type="entry name" value="Anthopleurin-A"/>
    <property type="match status" value="1"/>
</dbReference>
<dbReference type="InterPro" id="IPR023355">
    <property type="entry name" value="Myo_ane_neurotoxin_sf"/>
</dbReference>
<dbReference type="InterPro" id="IPR000881">
    <property type="entry name" value="Myotoxin"/>
</dbReference>
<dbReference type="Pfam" id="PF00819">
    <property type="entry name" value="Myotoxins"/>
    <property type="match status" value="1"/>
</dbReference>
<dbReference type="PRINTS" id="PR00283">
    <property type="entry name" value="MYOTOXIN"/>
</dbReference>
<dbReference type="SUPFAM" id="SSF57392">
    <property type="entry name" value="Defensin-like"/>
    <property type="match status" value="1"/>
</dbReference>
<dbReference type="PROSITE" id="PS00459">
    <property type="entry name" value="MYOTOXINS_1"/>
    <property type="match status" value="1"/>
</dbReference>
<dbReference type="PROSITE" id="PS51345">
    <property type="entry name" value="MYOTOXINS_2"/>
    <property type="match status" value="1"/>
</dbReference>
<organism>
    <name type="scientific">Crotalus viridis viridis</name>
    <name type="common">Prairie rattlesnake</name>
    <dbReference type="NCBI Taxonomy" id="8742"/>
    <lineage>
        <taxon>Eukaryota</taxon>
        <taxon>Metazoa</taxon>
        <taxon>Chordata</taxon>
        <taxon>Craniata</taxon>
        <taxon>Vertebrata</taxon>
        <taxon>Euteleostomi</taxon>
        <taxon>Lepidosauria</taxon>
        <taxon>Squamata</taxon>
        <taxon>Bifurcata</taxon>
        <taxon>Unidentata</taxon>
        <taxon>Episquamata</taxon>
        <taxon>Toxicofera</taxon>
        <taxon>Serpentes</taxon>
        <taxon>Colubroidea</taxon>
        <taxon>Viperidae</taxon>
        <taxon>Crotalinae</taxon>
        <taxon>Crotalus</taxon>
    </lineage>
</organism>
<proteinExistence type="evidence at protein level"/>
<evidence type="ECO:0000250" key="1"/>
<evidence type="ECO:0000250" key="2">
    <source>
        <dbReference type="UniProtKB" id="Q9PWF3"/>
    </source>
</evidence>
<evidence type="ECO:0000269" key="3">
    <source>
    </source>
</evidence>
<evidence type="ECO:0000305" key="4"/>
<evidence type="ECO:0000305" key="5">
    <source>
    </source>
</evidence>
<comment type="function">
    <text evidence="2">Cationic peptide that possesses multiple functions. It acts as a cell-penetrating peptide (CPP), and as a potent voltage-gated potassium channel (Kv) inhibitor. It exhibits antimicrobial activities, hind limb paralysis, and severe muscle necrosis by a non-enzymatic mechanism.</text>
</comment>
<comment type="subunit">
    <text evidence="1">Monomer.</text>
</comment>
<comment type="subcellular location">
    <subcellularLocation>
        <location evidence="3">Secreted</location>
    </subcellularLocation>
</comment>
<comment type="tissue specificity">
    <text evidence="5">Expressed by the venom gland.</text>
</comment>
<comment type="mass spectrometry"/>
<comment type="similarity">
    <text evidence="4">Belongs to the crotamine-myotoxin family.</text>
</comment>
<sequence>YKRCHKKGGHCFPKTVICLPPSSDFGKMDCRWKWKCCKKGSVNNA</sequence>
<keyword id="KW-0929">Antimicrobial</keyword>
<keyword id="KW-0903">Direct protein sequencing</keyword>
<keyword id="KW-1015">Disulfide bond</keyword>
<keyword id="KW-0872">Ion channel impairing toxin</keyword>
<keyword id="KW-0959">Myotoxin</keyword>
<keyword id="KW-0528">Neurotoxin</keyword>
<keyword id="KW-0632">Potassium channel impairing toxin</keyword>
<keyword id="KW-0964">Secreted</keyword>
<keyword id="KW-0800">Toxin</keyword>
<keyword id="KW-1220">Voltage-gated potassium channel impairing toxin</keyword>
<feature type="chain" id="PRO_0000221567" description="Myotoxin-3" evidence="3">
    <location>
        <begin position="1"/>
        <end position="45"/>
    </location>
</feature>
<feature type="disulfide bond" evidence="2">
    <location>
        <begin position="4"/>
        <end position="36"/>
    </location>
</feature>
<feature type="disulfide bond" evidence="2">
    <location>
        <begin position="11"/>
        <end position="30"/>
    </location>
</feature>
<feature type="disulfide bond" evidence="2">
    <location>
        <begin position="18"/>
        <end position="37"/>
    </location>
</feature>
<reference key="1">
    <citation type="journal article" date="1990" name="FEBS Lett.">
        <title>A new small myotoxin from the venom of the prairie rattlesnake (Crotalus viridis viridis).</title>
        <authorList>
            <person name="Griffin P.R."/>
            <person name="Aird S.D."/>
        </authorList>
    </citation>
    <scope>PROTEIN SEQUENCE</scope>
    <scope>MASS SPECTROMETRY</scope>
    <scope>SUBCELLULAR LOCATION</scope>
    <source>
        <tissue>Venom</tissue>
    </source>
</reference>
<accession>P63176</accession>
<accession>P19861</accession>